<sequence>MCDAAAATATTTTTAAVAAAVATTTASVALEATATQPGTTTTTVATASAGTTSPEAAIPTAATATSARNSNSERSARQNCCRLCIAPQTECISIINSYAADKEPLSTKIHNCVGIKVTPQDRLSQQICHACISYLNSWQSFKNRCFSSQAKQRQWLDTNKSKLLNYLDLNSAENGGGGFFDQHLHQQQQHHQHLENELEAEKEKATPTAASTAANILDGIHSLKKRKSLTVYPLPAMPIKDEPIDTDDDYQMKSIDESDDMVDPTMFLERSEHEGDVPLTASDYDYTAQHGVNASSVAASLPPNAVANVAAAGDSKVASCRACSLQFSTRANARRHERNLHPNLFQLSTDSPHNTPITKPTPALAAALEMQRAAAAAATAEANRAAGAAGGNISTQKYRQVVMNAFIKCEGGGYDYDNPEQYRPLLTRDKVEFIEQNDEFLEQYQTMTCRCCNKYFSTYKNFMAHVRKKYPQLPRNLCFNCLKMNDSKALFISHLKKRNCINLFRVLNALRGKTTTVVVPIADDVADDGATGSIPVADAGAGVVAMNSPTVTASGEVVTPGGGSERPEKLRAKELLVNKLYECKLCPKGFRTKHEFRTHVYDKHADVQRKDNNSIQCSFCGLDFADPVDRRRHYNNMDCIVRLRCMTCDAKLETHQRFLDHVYQDHLGGVGGGAVSDNASTTGSGMARSNSMEHSPGKRSLLGALGVGSSAEESRSSSAAPPLTSTPKLAGGNQVGGGGSTSASAAAAAQSSANRDASAPKSQYFSRMPQVCPICGQQYNNYNNVLRHMESKHPNKLPETYKCVRCGLGYPRISYLREHMINVHGVDKNRHSGGFEYIVNADAVKLADGSTPNVYTGRYDYVMKDLMSITNGGTLDDEEEEPGSVAKKMRLDDSSNNSSLVGVASQQKECPICNAVFSNNIGLSNHMRSHYTASNAVNAALAAANRMTPKSLTITATPATDSELGVGGTMSESAPATPANVPPAMANQTPQEQAVFRRSLDQAADRRFRRMRCRICQRRFSSKKSYRYHMLTDHQVQNVQFIKCKLCNAEFAYEKGLKVHLFKVHGKAIKDEMIIKQFECDVCSIVYSSESELQQHKRSVHKLTSASASTSASTSSKIDDDSLMDDGKPTSSDLADLSTLAAGGSTASAPLYWYQCKYCPSNFNTNKKLAIHINSHDEFDSNDYSCKDCGNVYSGRKSLWVHRYKKHPQVPNPAECSLCRKVFFDRQMHDNHTPTCNRKPITSTGAHQQQDGQLHSHHTAKRTIFRHKTGDDDDEEDDDEQQQLEERANSDGNGTTVGVASGSTAAAGTSLKIRIPEVACTICGARFTDQEHFSKHIQKHEQELYVDNPLAAMFDDGPADAGQFQVERQNENGEYACDLCAKTFPQVIALKVHRKWHFRGDSKQNPIDGEATQLTNNNHTTNNNNNNSMHLRELHAVGLMPNQQQQSLNNSCNSSMNHNNNSSSNRSKSMKRKRELKCEYCASTFISNNNLRRHMYELHKHEVSNLPEPPVIVVDDHLTCRRCQLKFDTKELWIEHKLADAKVVRPFCPFQWGCDLCGEYLSRKEKLMNHINNHLKEEVIVPVATKAAIERTAAMESAAADANAAATLSALGEGAETEDQFAEKVEAAGATTTDKLTNPDEEDSDDLDEDSSGDDDDSSGTGDDDDDDDSDDDEDGEGEDEDEEGDGGEGEDEEGVQPPAQLLPQQQHKTDLNLNQDDDDLVEEVISSDDDEDDDGEVESDDDDEDDDDEEDDVEEPEPVGLTVRPLMNGKSKMPPLIVASSDDEDDGVMPIEDIIEEEFDEDADPDPEDAIEEVDEDDLDEGEVEDEPNVVSTASFSESESSTTTTSNSHSHSHSTGERRKKAVDQLNDPGFTCDLCQLCFDSQELLQSHIKSHILNGPKLSTVSAAAAAAAAAATASSKATALLTAAKAKPDSKSAVLANNNNSKTSSKTVAAGATN</sequence>
<comment type="function">
    <text evidence="5">Required for normal development of ethanol tolerance. Relies on two distinct molecular pathways: a cellular stress pathway defined by hang, and a parallel pathway requiring octopamine.</text>
</comment>
<comment type="subcellular location">
    <subcellularLocation>
        <location evidence="5">Nucleus</location>
    </subcellularLocation>
</comment>
<comment type="alternative products">
    <event type="alternative splicing"/>
    <isoform>
        <id>Q9VXG1-1</id>
        <name evidence="9">D</name>
        <sequence type="displayed"/>
    </isoform>
    <isoform>
        <id>Q9VXG1-3</id>
        <name evidence="9">A</name>
        <sequence type="described" ref="VSP_058187 VSP_058188"/>
    </isoform>
</comment>
<comment type="tissue specificity">
    <text evidence="5">Expressed ubiquitously in the nervous system, in neurons not glia.</text>
</comment>
<comment type="disruption phenotype">
    <text evidence="5">Flies exhibit defective responses to environmental stressors, such as heat and the free-radical-generating agent paraquat.</text>
</comment>
<comment type="miscellaneous">
    <text evidence="7">Stress, at both the cellular and systemic levels, contributes to drug- and addiction-related behaviors in mammals. Function of hang suggests that this role may be conserved across evolution.</text>
</comment>
<reference evidence="8" key="1">
    <citation type="journal article" date="2005" name="Nature">
        <title>The hangover gene defines a stress pathway required for ethanol tolerance development.</title>
        <authorList>
            <person name="Scholz H."/>
            <person name="Franz M."/>
            <person name="Heberlein U."/>
        </authorList>
    </citation>
    <scope>NUCLEOTIDE SEQUENCE [GENOMIC DNA]</scope>
    <scope>FUNCTION</scope>
    <scope>SUBCELLULAR LOCATION</scope>
    <scope>TISSUE SPECIFICITY</scope>
    <scope>DISRUPTION PHENOTYPE</scope>
    <source>
        <strain evidence="5">Berkeley</strain>
    </source>
</reference>
<reference key="2">
    <citation type="journal article" date="2000" name="Science">
        <title>The genome sequence of Drosophila melanogaster.</title>
        <authorList>
            <person name="Adams M.D."/>
            <person name="Celniker S.E."/>
            <person name="Holt R.A."/>
            <person name="Evans C.A."/>
            <person name="Gocayne J.D."/>
            <person name="Amanatides P.G."/>
            <person name="Scherer S.E."/>
            <person name="Li P.W."/>
            <person name="Hoskins R.A."/>
            <person name="Galle R.F."/>
            <person name="George R.A."/>
            <person name="Lewis S.E."/>
            <person name="Richards S."/>
            <person name="Ashburner M."/>
            <person name="Henderson S.N."/>
            <person name="Sutton G.G."/>
            <person name="Wortman J.R."/>
            <person name="Yandell M.D."/>
            <person name="Zhang Q."/>
            <person name="Chen L.X."/>
            <person name="Brandon R.C."/>
            <person name="Rogers Y.-H.C."/>
            <person name="Blazej R.G."/>
            <person name="Champe M."/>
            <person name="Pfeiffer B.D."/>
            <person name="Wan K.H."/>
            <person name="Doyle C."/>
            <person name="Baxter E.G."/>
            <person name="Helt G."/>
            <person name="Nelson C.R."/>
            <person name="Miklos G.L.G."/>
            <person name="Abril J.F."/>
            <person name="Agbayani A."/>
            <person name="An H.-J."/>
            <person name="Andrews-Pfannkoch C."/>
            <person name="Baldwin D."/>
            <person name="Ballew R.M."/>
            <person name="Basu A."/>
            <person name="Baxendale J."/>
            <person name="Bayraktaroglu L."/>
            <person name="Beasley E.M."/>
            <person name="Beeson K.Y."/>
            <person name="Benos P.V."/>
            <person name="Berman B.P."/>
            <person name="Bhandari D."/>
            <person name="Bolshakov S."/>
            <person name="Borkova D."/>
            <person name="Botchan M.R."/>
            <person name="Bouck J."/>
            <person name="Brokstein P."/>
            <person name="Brottier P."/>
            <person name="Burtis K.C."/>
            <person name="Busam D.A."/>
            <person name="Butler H."/>
            <person name="Cadieu E."/>
            <person name="Center A."/>
            <person name="Chandra I."/>
            <person name="Cherry J.M."/>
            <person name="Cawley S."/>
            <person name="Dahlke C."/>
            <person name="Davenport L.B."/>
            <person name="Davies P."/>
            <person name="de Pablos B."/>
            <person name="Delcher A."/>
            <person name="Deng Z."/>
            <person name="Mays A.D."/>
            <person name="Dew I."/>
            <person name="Dietz S.M."/>
            <person name="Dodson K."/>
            <person name="Doup L.E."/>
            <person name="Downes M."/>
            <person name="Dugan-Rocha S."/>
            <person name="Dunkov B.C."/>
            <person name="Dunn P."/>
            <person name="Durbin K.J."/>
            <person name="Evangelista C.C."/>
            <person name="Ferraz C."/>
            <person name="Ferriera S."/>
            <person name="Fleischmann W."/>
            <person name="Fosler C."/>
            <person name="Gabrielian A.E."/>
            <person name="Garg N.S."/>
            <person name="Gelbart W.M."/>
            <person name="Glasser K."/>
            <person name="Glodek A."/>
            <person name="Gong F."/>
            <person name="Gorrell J.H."/>
            <person name="Gu Z."/>
            <person name="Guan P."/>
            <person name="Harris M."/>
            <person name="Harris N.L."/>
            <person name="Harvey D.A."/>
            <person name="Heiman T.J."/>
            <person name="Hernandez J.R."/>
            <person name="Houck J."/>
            <person name="Hostin D."/>
            <person name="Houston K.A."/>
            <person name="Howland T.J."/>
            <person name="Wei M.-H."/>
            <person name="Ibegwam C."/>
            <person name="Jalali M."/>
            <person name="Kalush F."/>
            <person name="Karpen G.H."/>
            <person name="Ke Z."/>
            <person name="Kennison J.A."/>
            <person name="Ketchum K.A."/>
            <person name="Kimmel B.E."/>
            <person name="Kodira C.D."/>
            <person name="Kraft C.L."/>
            <person name="Kravitz S."/>
            <person name="Kulp D."/>
            <person name="Lai Z."/>
            <person name="Lasko P."/>
            <person name="Lei Y."/>
            <person name="Levitsky A.A."/>
            <person name="Li J.H."/>
            <person name="Li Z."/>
            <person name="Liang Y."/>
            <person name="Lin X."/>
            <person name="Liu X."/>
            <person name="Mattei B."/>
            <person name="McIntosh T.C."/>
            <person name="McLeod M.P."/>
            <person name="McPherson D."/>
            <person name="Merkulov G."/>
            <person name="Milshina N.V."/>
            <person name="Mobarry C."/>
            <person name="Morris J."/>
            <person name="Moshrefi A."/>
            <person name="Mount S.M."/>
            <person name="Moy M."/>
            <person name="Murphy B."/>
            <person name="Murphy L."/>
            <person name="Muzny D.M."/>
            <person name="Nelson D.L."/>
            <person name="Nelson D.R."/>
            <person name="Nelson K.A."/>
            <person name="Nixon K."/>
            <person name="Nusskern D.R."/>
            <person name="Pacleb J.M."/>
            <person name="Palazzolo M."/>
            <person name="Pittman G.S."/>
            <person name="Pan S."/>
            <person name="Pollard J."/>
            <person name="Puri V."/>
            <person name="Reese M.G."/>
            <person name="Reinert K."/>
            <person name="Remington K."/>
            <person name="Saunders R.D.C."/>
            <person name="Scheeler F."/>
            <person name="Shen H."/>
            <person name="Shue B.C."/>
            <person name="Siden-Kiamos I."/>
            <person name="Simpson M."/>
            <person name="Skupski M.P."/>
            <person name="Smith T.J."/>
            <person name="Spier E."/>
            <person name="Spradling A.C."/>
            <person name="Stapleton M."/>
            <person name="Strong R."/>
            <person name="Sun E."/>
            <person name="Svirskas R."/>
            <person name="Tector C."/>
            <person name="Turner R."/>
            <person name="Venter E."/>
            <person name="Wang A.H."/>
            <person name="Wang X."/>
            <person name="Wang Z.-Y."/>
            <person name="Wassarman D.A."/>
            <person name="Weinstock G.M."/>
            <person name="Weissenbach J."/>
            <person name="Williams S.M."/>
            <person name="Woodage T."/>
            <person name="Worley K.C."/>
            <person name="Wu D."/>
            <person name="Yang S."/>
            <person name="Yao Q.A."/>
            <person name="Ye J."/>
            <person name="Yeh R.-F."/>
            <person name="Zaveri J.S."/>
            <person name="Zhan M."/>
            <person name="Zhang G."/>
            <person name="Zhao Q."/>
            <person name="Zheng L."/>
            <person name="Zheng X.H."/>
            <person name="Zhong F.N."/>
            <person name="Zhong W."/>
            <person name="Zhou X."/>
            <person name="Zhu S.C."/>
            <person name="Zhu X."/>
            <person name="Smith H.O."/>
            <person name="Gibbs R.A."/>
            <person name="Myers E.W."/>
            <person name="Rubin G.M."/>
            <person name="Venter J.C."/>
        </authorList>
    </citation>
    <scope>NUCLEOTIDE SEQUENCE [LARGE SCALE GENOMIC DNA]</scope>
    <source>
        <strain evidence="4">Berkeley</strain>
    </source>
</reference>
<reference evidence="8" key="3">
    <citation type="journal article" date="2002" name="Genome Biol.">
        <title>Annotation of the Drosophila melanogaster euchromatic genome: a systematic review.</title>
        <authorList>
            <person name="Misra S."/>
            <person name="Crosby M.A."/>
            <person name="Mungall C.J."/>
            <person name="Matthews B.B."/>
            <person name="Campbell K.S."/>
            <person name="Hradecky P."/>
            <person name="Huang Y."/>
            <person name="Kaminker J.S."/>
            <person name="Millburn G.H."/>
            <person name="Prochnik S.E."/>
            <person name="Smith C.D."/>
            <person name="Tupy J.L."/>
            <person name="Whitfield E.J."/>
            <person name="Bayraktaroglu L."/>
            <person name="Berman B.P."/>
            <person name="Bettencourt B.R."/>
            <person name="Celniker S.E."/>
            <person name="de Grey A.D.N.J."/>
            <person name="Drysdale R.A."/>
            <person name="Harris N.L."/>
            <person name="Richter J."/>
            <person name="Russo S."/>
            <person name="Schroeder A.J."/>
            <person name="Shu S.Q."/>
            <person name="Stapleton M."/>
            <person name="Yamada C."/>
            <person name="Ashburner M."/>
            <person name="Gelbart W.M."/>
            <person name="Rubin G.M."/>
            <person name="Lewis S.E."/>
        </authorList>
    </citation>
    <scope>GENOME REANNOTATION</scope>
    <scope>ALTERNATIVE SPLICING</scope>
    <source>
        <strain>Berkeley</strain>
    </source>
</reference>
<reference key="4">
    <citation type="journal article" date="2008" name="J. Proteome Res.">
        <title>Phosphoproteome analysis of Drosophila melanogaster embryos.</title>
        <authorList>
            <person name="Zhai B."/>
            <person name="Villen J."/>
            <person name="Beausoleil S.A."/>
            <person name="Mintseris J."/>
            <person name="Gygi S.P."/>
        </authorList>
    </citation>
    <scope>PHOSPHORYLATION [LARGE SCALE ANALYSIS] AT SER-228; THR-246; SER-680; SER-832; SER-894; SER-895; SER-898 AND SER-899</scope>
    <scope>IDENTIFICATION BY MASS SPECTROMETRY</scope>
    <source>
        <tissue>Embryo</tissue>
    </source>
</reference>
<accession>Q9VXG1</accession>
<accession>Q9VXG2</accession>
<evidence type="ECO:0000255" key="1">
    <source>
        <dbReference type="PROSITE-ProRule" id="PRU00042"/>
    </source>
</evidence>
<evidence type="ECO:0000255" key="2">
    <source>
        <dbReference type="PROSITE-ProRule" id="PRU01263"/>
    </source>
</evidence>
<evidence type="ECO:0000256" key="3">
    <source>
        <dbReference type="SAM" id="MobiDB-lite"/>
    </source>
</evidence>
<evidence type="ECO:0000269" key="4">
    <source>
    </source>
</evidence>
<evidence type="ECO:0000269" key="5">
    <source>
    </source>
</evidence>
<evidence type="ECO:0000269" key="6">
    <source>
    </source>
</evidence>
<evidence type="ECO:0000303" key="7">
    <source>
    </source>
</evidence>
<evidence type="ECO:0000305" key="8"/>
<evidence type="ECO:0000312" key="9">
    <source>
        <dbReference type="FlyBase" id="FBgn0026575"/>
    </source>
</evidence>
<name>HANG_DROME</name>
<protein>
    <recommendedName>
        <fullName>Zinc finger protein hangover</fullName>
    </recommendedName>
</protein>
<gene>
    <name type="primary">hang</name>
    <name type="ORF">CG32575</name>
</gene>
<feature type="chain" id="PRO_0000046924" description="Zinc finger protein hangover">
    <location>
        <begin position="1"/>
        <end position="1959"/>
    </location>
</feature>
<feature type="domain" description="ZAD" evidence="2">
    <location>
        <begin position="79"/>
        <end position="155"/>
    </location>
</feature>
<feature type="zinc finger region" description="C2H2-type 1" evidence="1">
    <location>
        <begin position="318"/>
        <end position="341"/>
    </location>
</feature>
<feature type="zinc finger region" description="C2H2-type 2; degenerate" evidence="1">
    <location>
        <begin position="447"/>
        <end position="469"/>
    </location>
</feature>
<feature type="zinc finger region" description="C2H2-type 3" evidence="1">
    <location>
        <begin position="581"/>
        <end position="604"/>
    </location>
</feature>
<feature type="zinc finger region" description="C2H2-type 4" evidence="1">
    <location>
        <begin position="770"/>
        <end position="793"/>
    </location>
</feature>
<feature type="zinc finger region" description="C2H2-type 5" evidence="1">
    <location>
        <begin position="801"/>
        <end position="824"/>
    </location>
</feature>
<feature type="zinc finger region" description="C2H2-type 6" evidence="1">
    <location>
        <begin position="908"/>
        <end position="930"/>
    </location>
</feature>
<feature type="zinc finger region" description="C2H2-type 7" evidence="1">
    <location>
        <begin position="1011"/>
        <end position="1034"/>
    </location>
</feature>
<feature type="zinc finger region" description="C2H2-type 8" evidence="1">
    <location>
        <begin position="1042"/>
        <end position="1065"/>
    </location>
</feature>
<feature type="zinc finger region" description="C2H2-type 9" evidence="1">
    <location>
        <begin position="1078"/>
        <end position="1101"/>
    </location>
</feature>
<feature type="zinc finger region" description="C2H2-type 10" evidence="1">
    <location>
        <begin position="1154"/>
        <end position="1176"/>
    </location>
</feature>
<feature type="zinc finger region" description="C2H2-type 11" evidence="1">
    <location>
        <begin position="1184"/>
        <end position="1207"/>
    </location>
</feature>
<feature type="zinc finger region" description="C2H2-type 12" evidence="1">
    <location>
        <begin position="1318"/>
        <end position="1340"/>
    </location>
</feature>
<feature type="zinc finger region" description="C2H2-type 13" evidence="1">
    <location>
        <begin position="1375"/>
        <end position="1397"/>
    </location>
</feature>
<feature type="zinc finger region" description="C2H2-type 14" evidence="1">
    <location>
        <begin position="1476"/>
        <end position="1499"/>
    </location>
</feature>
<feature type="zinc finger region" description="C2H2-type 15" evidence="1">
    <location>
        <begin position="1552"/>
        <end position="1574"/>
    </location>
</feature>
<feature type="zinc finger region" description="C2H2-type 16" evidence="1">
    <location>
        <begin position="1873"/>
        <end position="1895"/>
    </location>
</feature>
<feature type="region of interest" description="Disordered" evidence="3">
    <location>
        <begin position="178"/>
        <end position="208"/>
    </location>
</feature>
<feature type="region of interest" description="Disordered" evidence="3">
    <location>
        <begin position="674"/>
        <end position="762"/>
    </location>
</feature>
<feature type="region of interest" description="Disordered" evidence="3">
    <location>
        <begin position="960"/>
        <end position="991"/>
    </location>
</feature>
<feature type="region of interest" description="Disordered" evidence="3">
    <location>
        <begin position="1233"/>
        <end position="1301"/>
    </location>
</feature>
<feature type="region of interest" description="Disordered" evidence="3">
    <location>
        <begin position="1445"/>
        <end position="1471"/>
    </location>
</feature>
<feature type="region of interest" description="Disordered" evidence="3">
    <location>
        <begin position="1627"/>
        <end position="1865"/>
    </location>
</feature>
<feature type="region of interest" description="Disordered" evidence="3">
    <location>
        <begin position="1933"/>
        <end position="1959"/>
    </location>
</feature>
<feature type="compositionally biased region" description="Basic and acidic residues" evidence="3">
    <location>
        <begin position="192"/>
        <end position="205"/>
    </location>
</feature>
<feature type="compositionally biased region" description="Polar residues" evidence="3">
    <location>
        <begin position="677"/>
        <end position="693"/>
    </location>
</feature>
<feature type="compositionally biased region" description="Low complexity" evidence="3">
    <location>
        <begin position="716"/>
        <end position="727"/>
    </location>
</feature>
<feature type="compositionally biased region" description="Low complexity" evidence="3">
    <location>
        <begin position="741"/>
        <end position="759"/>
    </location>
</feature>
<feature type="compositionally biased region" description="Polar residues" evidence="3">
    <location>
        <begin position="1233"/>
        <end position="1253"/>
    </location>
</feature>
<feature type="compositionally biased region" description="Basic residues" evidence="3">
    <location>
        <begin position="1255"/>
        <end position="1267"/>
    </location>
</feature>
<feature type="compositionally biased region" description="Acidic residues" evidence="3">
    <location>
        <begin position="1271"/>
        <end position="1283"/>
    </location>
</feature>
<feature type="compositionally biased region" description="Low complexity" evidence="3">
    <location>
        <begin position="1445"/>
        <end position="1467"/>
    </location>
</feature>
<feature type="compositionally biased region" description="Acidic residues" evidence="3">
    <location>
        <begin position="1639"/>
        <end position="1695"/>
    </location>
</feature>
<feature type="compositionally biased region" description="Low complexity" evidence="3">
    <location>
        <begin position="1697"/>
        <end position="1715"/>
    </location>
</feature>
<feature type="compositionally biased region" description="Acidic residues" evidence="3">
    <location>
        <begin position="1716"/>
        <end position="1758"/>
    </location>
</feature>
<feature type="compositionally biased region" description="Acidic residues" evidence="3">
    <location>
        <begin position="1782"/>
        <end position="1829"/>
    </location>
</feature>
<feature type="compositionally biased region" description="Low complexity" evidence="3">
    <location>
        <begin position="1833"/>
        <end position="1851"/>
    </location>
</feature>
<feature type="compositionally biased region" description="Low complexity" evidence="3">
    <location>
        <begin position="1942"/>
        <end position="1952"/>
    </location>
</feature>
<feature type="binding site" evidence="2">
    <location>
        <position position="81"/>
    </location>
    <ligand>
        <name>Zn(2+)</name>
        <dbReference type="ChEBI" id="CHEBI:29105"/>
    </ligand>
</feature>
<feature type="binding site" evidence="2">
    <location>
        <position position="84"/>
    </location>
    <ligand>
        <name>Zn(2+)</name>
        <dbReference type="ChEBI" id="CHEBI:29105"/>
    </ligand>
</feature>
<feature type="binding site" evidence="2">
    <location>
        <position position="128"/>
    </location>
    <ligand>
        <name>Zn(2+)</name>
        <dbReference type="ChEBI" id="CHEBI:29105"/>
    </ligand>
</feature>
<feature type="binding site" evidence="2">
    <location>
        <position position="131"/>
    </location>
    <ligand>
        <name>Zn(2+)</name>
        <dbReference type="ChEBI" id="CHEBI:29105"/>
    </ligand>
</feature>
<feature type="modified residue" description="Phosphoserine" evidence="6">
    <location>
        <position position="228"/>
    </location>
</feature>
<feature type="modified residue" description="Phosphothreonine" evidence="6">
    <location>
        <position position="246"/>
    </location>
</feature>
<feature type="modified residue" description="Phosphoserine" evidence="6">
    <location>
        <position position="680"/>
    </location>
</feature>
<feature type="modified residue" description="Phosphoserine" evidence="6">
    <location>
        <position position="832"/>
    </location>
</feature>
<feature type="modified residue" description="Phosphoserine" evidence="6">
    <location>
        <position position="894"/>
    </location>
</feature>
<feature type="modified residue" description="Phosphoserine" evidence="6">
    <location>
        <position position="895"/>
    </location>
</feature>
<feature type="modified residue" description="Phosphoserine" evidence="6">
    <location>
        <position position="898"/>
    </location>
</feature>
<feature type="modified residue" description="Phosphoserine" evidence="6">
    <location>
        <position position="899"/>
    </location>
</feature>
<feature type="splice variant" id="VSP_058187" description="In isoform A.">
    <location>
        <begin position="872"/>
        <end position="875"/>
    </location>
</feature>
<feature type="splice variant" id="VSP_058188" description="In isoform A.">
    <original>ERRKKAVDQLNDPGFTCDLCQLCFDSQELLQSHIKSHILNGPKLSTVSAAAAAAAAAATASSKATALLTAAKAKPDSKSAVLANNNNSKTSSKTVAAGATN</original>
    <variation>ASPEPHQKPYPQWAKALDSVSSSSSSSSRRHSKQQGNSITNGSKGEA</variation>
    <location>
        <begin position="1859"/>
        <end position="1959"/>
    </location>
</feature>
<dbReference type="EMBL" id="AE014298">
    <property type="protein sequence ID" value="AAF48611.3"/>
    <property type="molecule type" value="Genomic_DNA"/>
</dbReference>
<dbReference type="EMBL" id="AE014298">
    <property type="protein sequence ID" value="AAF48612.4"/>
    <property type="molecule type" value="Genomic_DNA"/>
</dbReference>
<dbReference type="RefSeq" id="NP_727979.3">
    <molecule id="Q9VXG1-1"/>
    <property type="nucleotide sequence ID" value="NM_167520.3"/>
</dbReference>
<dbReference type="RefSeq" id="NP_727980.2">
    <molecule id="Q9VXG1-3"/>
    <property type="nucleotide sequence ID" value="NM_167521.3"/>
</dbReference>
<dbReference type="BioGRID" id="58953">
    <property type="interactions" value="9"/>
</dbReference>
<dbReference type="FunCoup" id="Q9VXG1">
    <property type="interactions" value="542"/>
</dbReference>
<dbReference type="IntAct" id="Q9VXG1">
    <property type="interactions" value="3"/>
</dbReference>
<dbReference type="STRING" id="7227.FBpp0288508"/>
<dbReference type="GlyGen" id="Q9VXG1">
    <property type="glycosylation" value="1 site"/>
</dbReference>
<dbReference type="iPTMnet" id="Q9VXG1"/>
<dbReference type="EnsemblMetazoa" id="FBtr0074276">
    <molecule id="Q9VXG1-3"/>
    <property type="protein sequence ID" value="FBpp0074052"/>
    <property type="gene ID" value="FBgn0026575"/>
</dbReference>
<dbReference type="EnsemblMetazoa" id="FBtr0343571">
    <molecule id="Q9VXG1-1"/>
    <property type="protein sequence ID" value="FBpp0310171"/>
    <property type="gene ID" value="FBgn0026575"/>
</dbReference>
<dbReference type="GeneID" id="32613"/>
<dbReference type="KEGG" id="dme:Dmel_CG32575"/>
<dbReference type="UCSC" id="CG32575-RA">
    <molecule id="Q9VXG1-1"/>
    <property type="organism name" value="d. melanogaster"/>
</dbReference>
<dbReference type="AGR" id="FB:FBgn0026575"/>
<dbReference type="CTD" id="32613"/>
<dbReference type="FlyBase" id="FBgn0026575">
    <property type="gene designation" value="hang"/>
</dbReference>
<dbReference type="VEuPathDB" id="VectorBase:FBgn0026575"/>
<dbReference type="eggNOG" id="KOG1721">
    <property type="taxonomic scope" value="Eukaryota"/>
</dbReference>
<dbReference type="GeneTree" id="ENSGT00940000164700"/>
<dbReference type="InParanoid" id="Q9VXG1"/>
<dbReference type="OrthoDB" id="6077919at2759"/>
<dbReference type="SignaLink" id="Q9VXG1"/>
<dbReference type="BioGRID-ORCS" id="32613">
    <property type="hits" value="1 hit in 1 CRISPR screen"/>
</dbReference>
<dbReference type="ChiTaRS" id="hang">
    <property type="organism name" value="fly"/>
</dbReference>
<dbReference type="GenomeRNAi" id="32613"/>
<dbReference type="PRO" id="PR:Q9VXG1"/>
<dbReference type="Proteomes" id="UP000000803">
    <property type="component" value="Chromosome X"/>
</dbReference>
<dbReference type="Bgee" id="FBgn0026575">
    <property type="expression patterns" value="Expressed in spermatocyte cyst cell (Drosophila) in testis and 295 other cell types or tissues"/>
</dbReference>
<dbReference type="ExpressionAtlas" id="Q9VXG1">
    <property type="expression patterns" value="baseline and differential"/>
</dbReference>
<dbReference type="GO" id="GO:0005634">
    <property type="term" value="C:nucleus"/>
    <property type="evidence" value="ECO:0000314"/>
    <property type="project" value="UniProtKB"/>
</dbReference>
<dbReference type="GO" id="GO:0000981">
    <property type="term" value="F:DNA-binding transcription factor activity, RNA polymerase II-specific"/>
    <property type="evidence" value="ECO:0000318"/>
    <property type="project" value="GO_Central"/>
</dbReference>
<dbReference type="GO" id="GO:0003729">
    <property type="term" value="F:mRNA binding"/>
    <property type="evidence" value="ECO:0000314"/>
    <property type="project" value="FlyBase"/>
</dbReference>
<dbReference type="GO" id="GO:0003676">
    <property type="term" value="F:nucleic acid binding"/>
    <property type="evidence" value="ECO:0000303"/>
    <property type="project" value="UniProtKB"/>
</dbReference>
<dbReference type="GO" id="GO:0043565">
    <property type="term" value="F:sequence-specific DNA binding"/>
    <property type="evidence" value="ECO:0000318"/>
    <property type="project" value="GO_Central"/>
</dbReference>
<dbReference type="GO" id="GO:0008270">
    <property type="term" value="F:zinc ion binding"/>
    <property type="evidence" value="ECO:0007669"/>
    <property type="project" value="UniProtKB-KW"/>
</dbReference>
<dbReference type="GO" id="GO:0048149">
    <property type="term" value="P:behavioral response to ethanol"/>
    <property type="evidence" value="ECO:0000315"/>
    <property type="project" value="FlyBase"/>
</dbReference>
<dbReference type="GO" id="GO:0106072">
    <property type="term" value="P:negative regulation of adenylate cyclase-activating G protein-coupled receptor signaling pathway"/>
    <property type="evidence" value="ECO:0000315"/>
    <property type="project" value="FlyBase"/>
</dbReference>
<dbReference type="GO" id="GO:0006357">
    <property type="term" value="P:regulation of transcription by RNA polymerase II"/>
    <property type="evidence" value="ECO:0000318"/>
    <property type="project" value="GO_Central"/>
</dbReference>
<dbReference type="GO" id="GO:0045471">
    <property type="term" value="P:response to ethanol"/>
    <property type="evidence" value="ECO:0000315"/>
    <property type="project" value="UniProtKB"/>
</dbReference>
<dbReference type="GO" id="GO:0009408">
    <property type="term" value="P:response to heat"/>
    <property type="evidence" value="ECO:0000315"/>
    <property type="project" value="FlyBase"/>
</dbReference>
<dbReference type="GO" id="GO:0006979">
    <property type="term" value="P:response to oxidative stress"/>
    <property type="evidence" value="ECO:0000315"/>
    <property type="project" value="FlyBase"/>
</dbReference>
<dbReference type="FunFam" id="3.40.1800.20:FF:000007">
    <property type="entry name" value="Hangover, isoform C"/>
    <property type="match status" value="1"/>
</dbReference>
<dbReference type="Gene3D" id="3.40.1800.20">
    <property type="match status" value="1"/>
</dbReference>
<dbReference type="Gene3D" id="3.30.160.60">
    <property type="entry name" value="Classic Zinc Finger"/>
    <property type="match status" value="7"/>
</dbReference>
<dbReference type="InterPro" id="IPR003604">
    <property type="entry name" value="Matrin/U1-like-C_Znf_C2H2"/>
</dbReference>
<dbReference type="InterPro" id="IPR012934">
    <property type="entry name" value="Znf_AD"/>
</dbReference>
<dbReference type="InterPro" id="IPR036236">
    <property type="entry name" value="Znf_C2H2_sf"/>
</dbReference>
<dbReference type="InterPro" id="IPR013087">
    <property type="entry name" value="Znf_C2H2_type"/>
</dbReference>
<dbReference type="PANTHER" id="PTHR24376:SF235">
    <property type="entry name" value="C2H2-TYPE DOMAIN-CONTAINING PROTEIN"/>
    <property type="match status" value="1"/>
</dbReference>
<dbReference type="PANTHER" id="PTHR24376">
    <property type="entry name" value="ZINC FINGER PROTEIN"/>
    <property type="match status" value="1"/>
</dbReference>
<dbReference type="Pfam" id="PF07776">
    <property type="entry name" value="zf-AD"/>
    <property type="match status" value="1"/>
</dbReference>
<dbReference type="Pfam" id="PF00096">
    <property type="entry name" value="zf-C2H2"/>
    <property type="match status" value="4"/>
</dbReference>
<dbReference type="Pfam" id="PF13894">
    <property type="entry name" value="zf-C2H2_4"/>
    <property type="match status" value="1"/>
</dbReference>
<dbReference type="Pfam" id="PF12874">
    <property type="entry name" value="zf-met"/>
    <property type="match status" value="1"/>
</dbReference>
<dbReference type="SMART" id="SM00868">
    <property type="entry name" value="zf-AD"/>
    <property type="match status" value="1"/>
</dbReference>
<dbReference type="SMART" id="SM00355">
    <property type="entry name" value="ZnF_C2H2"/>
    <property type="match status" value="19"/>
</dbReference>
<dbReference type="SMART" id="SM00451">
    <property type="entry name" value="ZnF_U1"/>
    <property type="match status" value="3"/>
</dbReference>
<dbReference type="SUPFAM" id="SSF57667">
    <property type="entry name" value="beta-beta-alpha zinc fingers"/>
    <property type="match status" value="5"/>
</dbReference>
<dbReference type="SUPFAM" id="SSF57716">
    <property type="entry name" value="Glucocorticoid receptor-like (DNA-binding domain)"/>
    <property type="match status" value="1"/>
</dbReference>
<dbReference type="PROSITE" id="PS51915">
    <property type="entry name" value="ZAD"/>
    <property type="match status" value="1"/>
</dbReference>
<dbReference type="PROSITE" id="PS00028">
    <property type="entry name" value="ZINC_FINGER_C2H2_1"/>
    <property type="match status" value="16"/>
</dbReference>
<dbReference type="PROSITE" id="PS50157">
    <property type="entry name" value="ZINC_FINGER_C2H2_2"/>
    <property type="match status" value="13"/>
</dbReference>
<keyword id="KW-0025">Alternative splicing</keyword>
<keyword id="KW-0175">Coiled coil</keyword>
<keyword id="KW-0479">Metal-binding</keyword>
<keyword id="KW-0539">Nucleus</keyword>
<keyword id="KW-0597">Phosphoprotein</keyword>
<keyword id="KW-1185">Reference proteome</keyword>
<keyword id="KW-0677">Repeat</keyword>
<keyword id="KW-0862">Zinc</keyword>
<keyword id="KW-0863">Zinc-finger</keyword>
<proteinExistence type="evidence at protein level"/>
<organism>
    <name type="scientific">Drosophila melanogaster</name>
    <name type="common">Fruit fly</name>
    <dbReference type="NCBI Taxonomy" id="7227"/>
    <lineage>
        <taxon>Eukaryota</taxon>
        <taxon>Metazoa</taxon>
        <taxon>Ecdysozoa</taxon>
        <taxon>Arthropoda</taxon>
        <taxon>Hexapoda</taxon>
        <taxon>Insecta</taxon>
        <taxon>Pterygota</taxon>
        <taxon>Neoptera</taxon>
        <taxon>Endopterygota</taxon>
        <taxon>Diptera</taxon>
        <taxon>Brachycera</taxon>
        <taxon>Muscomorpha</taxon>
        <taxon>Ephydroidea</taxon>
        <taxon>Drosophilidae</taxon>
        <taxon>Drosophila</taxon>
        <taxon>Sophophora</taxon>
    </lineage>
</organism>